<gene>
    <name evidence="1" type="primary">greA</name>
    <name type="ordered locus">SAR1689</name>
</gene>
<organism>
    <name type="scientific">Staphylococcus aureus (strain MRSA252)</name>
    <dbReference type="NCBI Taxonomy" id="282458"/>
    <lineage>
        <taxon>Bacteria</taxon>
        <taxon>Bacillati</taxon>
        <taxon>Bacillota</taxon>
        <taxon>Bacilli</taxon>
        <taxon>Bacillales</taxon>
        <taxon>Staphylococcaceae</taxon>
        <taxon>Staphylococcus</taxon>
    </lineage>
</organism>
<name>GREA_STAAR</name>
<dbReference type="EMBL" id="BX571856">
    <property type="protein sequence ID" value="CAG40681.1"/>
    <property type="molecule type" value="Genomic_DNA"/>
</dbReference>
<dbReference type="RefSeq" id="WP_000431312.1">
    <property type="nucleotide sequence ID" value="NC_002952.2"/>
</dbReference>
<dbReference type="SMR" id="Q6GG93"/>
<dbReference type="KEGG" id="sar:SAR1689"/>
<dbReference type="HOGENOM" id="CLU_101379_2_1_9"/>
<dbReference type="Proteomes" id="UP000000596">
    <property type="component" value="Chromosome"/>
</dbReference>
<dbReference type="GO" id="GO:0003677">
    <property type="term" value="F:DNA binding"/>
    <property type="evidence" value="ECO:0007669"/>
    <property type="project" value="UniProtKB-UniRule"/>
</dbReference>
<dbReference type="GO" id="GO:0070063">
    <property type="term" value="F:RNA polymerase binding"/>
    <property type="evidence" value="ECO:0007669"/>
    <property type="project" value="InterPro"/>
</dbReference>
<dbReference type="GO" id="GO:0006354">
    <property type="term" value="P:DNA-templated transcription elongation"/>
    <property type="evidence" value="ECO:0007669"/>
    <property type="project" value="TreeGrafter"/>
</dbReference>
<dbReference type="GO" id="GO:0032784">
    <property type="term" value="P:regulation of DNA-templated transcription elongation"/>
    <property type="evidence" value="ECO:0007669"/>
    <property type="project" value="UniProtKB-UniRule"/>
</dbReference>
<dbReference type="FunFam" id="1.10.287.180:FF:000001">
    <property type="entry name" value="Transcription elongation factor GreA"/>
    <property type="match status" value="1"/>
</dbReference>
<dbReference type="FunFam" id="3.10.50.30:FF:000001">
    <property type="entry name" value="Transcription elongation factor GreA"/>
    <property type="match status" value="1"/>
</dbReference>
<dbReference type="Gene3D" id="3.10.50.30">
    <property type="entry name" value="Transcription elongation factor, GreA/GreB, C-terminal domain"/>
    <property type="match status" value="1"/>
</dbReference>
<dbReference type="Gene3D" id="1.10.287.180">
    <property type="entry name" value="Transcription elongation factor, GreA/GreB, N-terminal domain"/>
    <property type="match status" value="1"/>
</dbReference>
<dbReference type="HAMAP" id="MF_00105">
    <property type="entry name" value="GreA_GreB"/>
    <property type="match status" value="1"/>
</dbReference>
<dbReference type="InterPro" id="IPR036953">
    <property type="entry name" value="GreA/GreB_C_sf"/>
</dbReference>
<dbReference type="InterPro" id="IPR018151">
    <property type="entry name" value="TF_GreA/GreB_CS"/>
</dbReference>
<dbReference type="InterPro" id="IPR006359">
    <property type="entry name" value="Tscrpt_elong_fac_GreA"/>
</dbReference>
<dbReference type="InterPro" id="IPR028624">
    <property type="entry name" value="Tscrpt_elong_fac_GreA/B"/>
</dbReference>
<dbReference type="InterPro" id="IPR001437">
    <property type="entry name" value="Tscrpt_elong_fac_GreA/B_C"/>
</dbReference>
<dbReference type="InterPro" id="IPR023459">
    <property type="entry name" value="Tscrpt_elong_fac_GreA/B_fam"/>
</dbReference>
<dbReference type="InterPro" id="IPR022691">
    <property type="entry name" value="Tscrpt_elong_fac_GreA/B_N"/>
</dbReference>
<dbReference type="InterPro" id="IPR036805">
    <property type="entry name" value="Tscrpt_elong_fac_GreA/B_N_sf"/>
</dbReference>
<dbReference type="NCBIfam" id="TIGR01462">
    <property type="entry name" value="greA"/>
    <property type="match status" value="1"/>
</dbReference>
<dbReference type="NCBIfam" id="NF001261">
    <property type="entry name" value="PRK00226.1-2"/>
    <property type="match status" value="1"/>
</dbReference>
<dbReference type="NCBIfam" id="NF001263">
    <property type="entry name" value="PRK00226.1-4"/>
    <property type="match status" value="1"/>
</dbReference>
<dbReference type="PANTHER" id="PTHR30437">
    <property type="entry name" value="TRANSCRIPTION ELONGATION FACTOR GREA"/>
    <property type="match status" value="1"/>
</dbReference>
<dbReference type="PANTHER" id="PTHR30437:SF4">
    <property type="entry name" value="TRANSCRIPTION ELONGATION FACTOR GREA"/>
    <property type="match status" value="1"/>
</dbReference>
<dbReference type="Pfam" id="PF01272">
    <property type="entry name" value="GreA_GreB"/>
    <property type="match status" value="1"/>
</dbReference>
<dbReference type="Pfam" id="PF03449">
    <property type="entry name" value="GreA_GreB_N"/>
    <property type="match status" value="1"/>
</dbReference>
<dbReference type="PIRSF" id="PIRSF006092">
    <property type="entry name" value="GreA_GreB"/>
    <property type="match status" value="1"/>
</dbReference>
<dbReference type="SUPFAM" id="SSF54534">
    <property type="entry name" value="FKBP-like"/>
    <property type="match status" value="1"/>
</dbReference>
<dbReference type="SUPFAM" id="SSF46557">
    <property type="entry name" value="GreA transcript cleavage protein, N-terminal domain"/>
    <property type="match status" value="1"/>
</dbReference>
<dbReference type="PROSITE" id="PS00829">
    <property type="entry name" value="GREAB_1"/>
    <property type="match status" value="1"/>
</dbReference>
<dbReference type="PROSITE" id="PS00830">
    <property type="entry name" value="GREAB_2"/>
    <property type="match status" value="1"/>
</dbReference>
<protein>
    <recommendedName>
        <fullName evidence="1">Transcription elongation factor GreA</fullName>
    </recommendedName>
    <alternativeName>
        <fullName evidence="1">Transcript cleavage factor GreA</fullName>
    </alternativeName>
</protein>
<accession>Q6GG93</accession>
<sequence length="158" mass="17743">MENQKQYPMTQEGFEKLERELEELKTVKRPEVVEKIKVARSFGDLSENSEYDAAKDEQGFIEQDIQRIEHMLRNALIIEDTGDNNVVKIGKTVTFVELPGDEEESYQIVGSAESDAFNGKISNESPMAKALIGKGLDDEVRVPLPNGGEMNVKIVNIQ</sequence>
<comment type="function">
    <text evidence="1">Necessary for efficient RNA polymerase transcription elongation past template-encoded arresting sites. The arresting sites in DNA have the property of trapping a certain fraction of elongating RNA polymerases that pass through, resulting in locked ternary complexes. Cleavage of the nascent transcript by cleavage factors such as GreA or GreB allows the resumption of elongation from the new 3'terminus. GreA releases sequences of 2 to 3 nucleotides.</text>
</comment>
<comment type="similarity">
    <text evidence="1">Belongs to the GreA/GreB family.</text>
</comment>
<feature type="chain" id="PRO_0000176973" description="Transcription elongation factor GreA">
    <location>
        <begin position="1"/>
        <end position="158"/>
    </location>
</feature>
<feature type="coiled-coil region" evidence="1">
    <location>
        <begin position="4"/>
        <end position="70"/>
    </location>
</feature>
<evidence type="ECO:0000255" key="1">
    <source>
        <dbReference type="HAMAP-Rule" id="MF_00105"/>
    </source>
</evidence>
<proteinExistence type="inferred from homology"/>
<reference key="1">
    <citation type="journal article" date="2004" name="Proc. Natl. Acad. Sci. U.S.A.">
        <title>Complete genomes of two clinical Staphylococcus aureus strains: evidence for the rapid evolution of virulence and drug resistance.</title>
        <authorList>
            <person name="Holden M.T.G."/>
            <person name="Feil E.J."/>
            <person name="Lindsay J.A."/>
            <person name="Peacock S.J."/>
            <person name="Day N.P.J."/>
            <person name="Enright M.C."/>
            <person name="Foster T.J."/>
            <person name="Moore C.E."/>
            <person name="Hurst L."/>
            <person name="Atkin R."/>
            <person name="Barron A."/>
            <person name="Bason N."/>
            <person name="Bentley S.D."/>
            <person name="Chillingworth C."/>
            <person name="Chillingworth T."/>
            <person name="Churcher C."/>
            <person name="Clark L."/>
            <person name="Corton C."/>
            <person name="Cronin A."/>
            <person name="Doggett J."/>
            <person name="Dowd L."/>
            <person name="Feltwell T."/>
            <person name="Hance Z."/>
            <person name="Harris B."/>
            <person name="Hauser H."/>
            <person name="Holroyd S."/>
            <person name="Jagels K."/>
            <person name="James K.D."/>
            <person name="Lennard N."/>
            <person name="Line A."/>
            <person name="Mayes R."/>
            <person name="Moule S."/>
            <person name="Mungall K."/>
            <person name="Ormond D."/>
            <person name="Quail M.A."/>
            <person name="Rabbinowitsch E."/>
            <person name="Rutherford K.M."/>
            <person name="Sanders M."/>
            <person name="Sharp S."/>
            <person name="Simmonds M."/>
            <person name="Stevens K."/>
            <person name="Whitehead S."/>
            <person name="Barrell B.G."/>
            <person name="Spratt B.G."/>
            <person name="Parkhill J."/>
        </authorList>
    </citation>
    <scope>NUCLEOTIDE SEQUENCE [LARGE SCALE GENOMIC DNA]</scope>
    <source>
        <strain>MRSA252</strain>
    </source>
</reference>
<keyword id="KW-0175">Coiled coil</keyword>
<keyword id="KW-0238">DNA-binding</keyword>
<keyword id="KW-0804">Transcription</keyword>
<keyword id="KW-0805">Transcription regulation</keyword>